<name>GG6L4_HUMAN</name>
<feature type="chain" id="PRO_0000332264" description="Golgin subfamily A member 6-like protein 4">
    <location>
        <begin position="1"/>
        <end position="574"/>
    </location>
</feature>
<feature type="region of interest" description="Disordered" evidence="2">
    <location>
        <begin position="1"/>
        <end position="77"/>
    </location>
</feature>
<feature type="region of interest" description="Disordered" evidence="2">
    <location>
        <begin position="491"/>
        <end position="552"/>
    </location>
</feature>
<feature type="coiled-coil region" evidence="1">
    <location>
        <begin position="157"/>
        <end position="496"/>
    </location>
</feature>
<feature type="compositionally biased region" description="Pro residues" evidence="2">
    <location>
        <begin position="1"/>
        <end position="11"/>
    </location>
</feature>
<feature type="compositionally biased region" description="Polar residues" evidence="2">
    <location>
        <begin position="51"/>
        <end position="62"/>
    </location>
</feature>
<feature type="compositionally biased region" description="Basic and acidic residues" evidence="2">
    <location>
        <begin position="491"/>
        <end position="504"/>
    </location>
</feature>
<feature type="compositionally biased region" description="Low complexity" evidence="2">
    <location>
        <begin position="508"/>
        <end position="523"/>
    </location>
</feature>
<gene>
    <name type="primary">GOLGA6L4</name>
</gene>
<keyword id="KW-0175">Coiled coil</keyword>
<keyword id="KW-1185">Reference proteome</keyword>
<comment type="similarity">
    <text evidence="3">Belongs to the GOLGA6 family.</text>
</comment>
<proteinExistence type="inferred from homology"/>
<protein>
    <recommendedName>
        <fullName>Golgin subfamily A member 6-like protein 4</fullName>
    </recommendedName>
</protein>
<reference key="1">
    <citation type="journal article" date="2006" name="Nature">
        <title>Analysis of the DNA sequence and duplication history of human chromosome 15.</title>
        <authorList>
            <person name="Zody M.C."/>
            <person name="Garber M."/>
            <person name="Sharpe T."/>
            <person name="Young S.K."/>
            <person name="Rowen L."/>
            <person name="O'Neill K."/>
            <person name="Whittaker C.A."/>
            <person name="Kamal M."/>
            <person name="Chang J.L."/>
            <person name="Cuomo C.A."/>
            <person name="Dewar K."/>
            <person name="FitzGerald M.G."/>
            <person name="Kodira C.D."/>
            <person name="Madan A."/>
            <person name="Qin S."/>
            <person name="Yang X."/>
            <person name="Abbasi N."/>
            <person name="Abouelleil A."/>
            <person name="Arachchi H.M."/>
            <person name="Baradarani L."/>
            <person name="Birditt B."/>
            <person name="Bloom S."/>
            <person name="Bloom T."/>
            <person name="Borowsky M.L."/>
            <person name="Burke J."/>
            <person name="Butler J."/>
            <person name="Cook A."/>
            <person name="DeArellano K."/>
            <person name="DeCaprio D."/>
            <person name="Dorris L. III"/>
            <person name="Dors M."/>
            <person name="Eichler E.E."/>
            <person name="Engels R."/>
            <person name="Fahey J."/>
            <person name="Fleetwood P."/>
            <person name="Friedman C."/>
            <person name="Gearin G."/>
            <person name="Hall J.L."/>
            <person name="Hensley G."/>
            <person name="Johnson E."/>
            <person name="Jones C."/>
            <person name="Kamat A."/>
            <person name="Kaur A."/>
            <person name="Locke D.P."/>
            <person name="Madan A."/>
            <person name="Munson G."/>
            <person name="Jaffe D.B."/>
            <person name="Lui A."/>
            <person name="Macdonald P."/>
            <person name="Mauceli E."/>
            <person name="Naylor J.W."/>
            <person name="Nesbitt R."/>
            <person name="Nicol R."/>
            <person name="O'Leary S.B."/>
            <person name="Ratcliffe A."/>
            <person name="Rounsley S."/>
            <person name="She X."/>
            <person name="Sneddon K.M.B."/>
            <person name="Stewart S."/>
            <person name="Sougnez C."/>
            <person name="Stone S.M."/>
            <person name="Topham K."/>
            <person name="Vincent D."/>
            <person name="Wang S."/>
            <person name="Zimmer A.R."/>
            <person name="Birren B.W."/>
            <person name="Hood L."/>
            <person name="Lander E.S."/>
            <person name="Nusbaum C."/>
        </authorList>
    </citation>
    <scope>NUCLEOTIDE SEQUENCE [LARGE SCALE GENOMIC DNA]</scope>
</reference>
<sequence>MWPQPRFPPHPAMSEKTQQGKLAAAKKKLKAYWQRKSPGIPAGANRKKKINGSSPDTATSGGYHSPGDSATGIYGEGRASSTTLEDLESQYQELAVALDSSSAIISQLTENINSLVRTSKEEKKHEIHLVQKLGRSLFKLKNQTAEPLAPEPPAGPSKVEQLQDETNHLRKELESVGRQLQAEVENNQMLSLLNRRQEERLREQEERLREQEERLREQEDRLHEQEERLREQEERLCEQEERLREHEERLCEQEERLCEQEERLREQEERLHEQEERLREQEERLCEQEERLREQEERLCEQEERLREQEERLCEQEKLPGQERLLEEVEKLLEQERRQEEQERLLERERLLEEVEKLLEQERQQEEQERLLERERLLEEVEKLLEQERRQEEQERLLERERLLDEVEELLDEVEELLEQERLRQQDERLWQQETLQELERLRELERLRELERMLELGWEALYEQRAEPRSGFEELNNENKSTLQLEQQVKELKKSGGAEEPRGSESAAAARPVAGAPVPQGAWMCGQAGWTPQEHPGLSGEAVGTGEAAGGAGEAACHSFRAAENRELNITII</sequence>
<organism>
    <name type="scientific">Homo sapiens</name>
    <name type="common">Human</name>
    <dbReference type="NCBI Taxonomy" id="9606"/>
    <lineage>
        <taxon>Eukaryota</taxon>
        <taxon>Metazoa</taxon>
        <taxon>Chordata</taxon>
        <taxon>Craniata</taxon>
        <taxon>Vertebrata</taxon>
        <taxon>Euteleostomi</taxon>
        <taxon>Mammalia</taxon>
        <taxon>Eutheria</taxon>
        <taxon>Euarchontoglires</taxon>
        <taxon>Primates</taxon>
        <taxon>Haplorrhini</taxon>
        <taxon>Catarrhini</taxon>
        <taxon>Hominidae</taxon>
        <taxon>Homo</taxon>
    </lineage>
</organism>
<accession>A6NEF3</accession>
<accession>D6REZ9</accession>
<dbReference type="EMBL" id="AC136698">
    <property type="status" value="NOT_ANNOTATED_CDS"/>
    <property type="molecule type" value="Genomic_DNA"/>
</dbReference>
<dbReference type="CCDS" id="CCDS73774.1"/>
<dbReference type="RefSeq" id="NP_001254465.2">
    <property type="nucleotide sequence ID" value="NM_001267536.3"/>
</dbReference>
<dbReference type="SMR" id="A6NEF3"/>
<dbReference type="STRING" id="9606.ENSP00000421586"/>
<dbReference type="iPTMnet" id="A6NEF3"/>
<dbReference type="PhosphoSitePlus" id="A6NEF3"/>
<dbReference type="BioMuta" id="GOLGA6L4"/>
<dbReference type="jPOST" id="A6NEF3"/>
<dbReference type="MassIVE" id="A6NEF3"/>
<dbReference type="PaxDb" id="9606-ENSP00000421586"/>
<dbReference type="PeptideAtlas" id="A6NEF3"/>
<dbReference type="Antibodypedia" id="65891">
    <property type="antibodies" value="12 antibodies from 6 providers"/>
</dbReference>
<dbReference type="DNASU" id="643707"/>
<dbReference type="Ensembl" id="ENST00000510439.7">
    <property type="protein sequence ID" value="ENSP00000421586.2"/>
    <property type="gene ID" value="ENSG00000184206.13"/>
</dbReference>
<dbReference type="GeneID" id="643707"/>
<dbReference type="KEGG" id="hsa:643707"/>
<dbReference type="MANE-Select" id="ENST00000510439.7">
    <property type="protein sequence ID" value="ENSP00000421586.2"/>
    <property type="RefSeq nucleotide sequence ID" value="NM_001267536.3"/>
    <property type="RefSeq protein sequence ID" value="NP_001254465.2"/>
</dbReference>
<dbReference type="UCSC" id="uc059mrg.1">
    <property type="organism name" value="human"/>
</dbReference>
<dbReference type="AGR" id="HGNC:27256"/>
<dbReference type="CTD" id="643707"/>
<dbReference type="GeneCards" id="GOLGA6L4"/>
<dbReference type="HGNC" id="HGNC:27256">
    <property type="gene designation" value="GOLGA6L4"/>
</dbReference>
<dbReference type="HPA" id="ENSG00000184206">
    <property type="expression patterns" value="Low tissue specificity"/>
</dbReference>
<dbReference type="neXtProt" id="NX_A6NEF3"/>
<dbReference type="VEuPathDB" id="HostDB:ENSG00000184206"/>
<dbReference type="eggNOG" id="KOG4725">
    <property type="taxonomic scope" value="Eukaryota"/>
</dbReference>
<dbReference type="GeneTree" id="ENSGT00910000144587"/>
<dbReference type="InParanoid" id="A6NEF3"/>
<dbReference type="OMA" id="MVETERM"/>
<dbReference type="OrthoDB" id="35758at314295"/>
<dbReference type="PAN-GO" id="A6NEF3">
    <property type="GO annotations" value="0 GO annotations based on evolutionary models"/>
</dbReference>
<dbReference type="PhylomeDB" id="A6NEF3"/>
<dbReference type="PathwayCommons" id="A6NEF3"/>
<dbReference type="BioGRID-ORCS" id="643707">
    <property type="hits" value="52 hits in 273 CRISPR screens"/>
</dbReference>
<dbReference type="GenomeRNAi" id="643707"/>
<dbReference type="Pharos" id="A6NEF3">
    <property type="development level" value="Tdark"/>
</dbReference>
<dbReference type="PRO" id="PR:A6NEF3"/>
<dbReference type="Proteomes" id="UP000005640">
    <property type="component" value="Chromosome 15"/>
</dbReference>
<dbReference type="RNAct" id="A6NEF3">
    <property type="molecule type" value="protein"/>
</dbReference>
<dbReference type="Bgee" id="ENSG00000184206">
    <property type="expression patterns" value="Expressed in left ovary and 98 other cell types or tissues"/>
</dbReference>
<dbReference type="ExpressionAtlas" id="A6NEF3">
    <property type="expression patterns" value="baseline and differential"/>
</dbReference>
<dbReference type="InterPro" id="IPR026737">
    <property type="entry name" value="GOLGA6L"/>
</dbReference>
<dbReference type="InterPro" id="IPR043976">
    <property type="entry name" value="GOLGA_cons_dom"/>
</dbReference>
<dbReference type="PANTHER" id="PTHR23143:SF19">
    <property type="entry name" value="GOLGIN SUBFAMILY A MEMBER 6-LIKE PROTEIN 10-RELATED"/>
    <property type="match status" value="1"/>
</dbReference>
<dbReference type="PANTHER" id="PTHR23143">
    <property type="entry name" value="TRICHOHYALIN-RELATED"/>
    <property type="match status" value="1"/>
</dbReference>
<dbReference type="Pfam" id="PF15070">
    <property type="entry name" value="GOLGA2L5"/>
    <property type="match status" value="1"/>
</dbReference>
<evidence type="ECO:0000255" key="1"/>
<evidence type="ECO:0000256" key="2">
    <source>
        <dbReference type="SAM" id="MobiDB-lite"/>
    </source>
</evidence>
<evidence type="ECO:0000305" key="3"/>